<gene>
    <name evidence="1" type="primary">rpsI</name>
    <name type="ordered locus">MYPU_4960</name>
</gene>
<feature type="chain" id="PRO_0000111378" description="Small ribosomal subunit protein uS9">
    <location>
        <begin position="1"/>
        <end position="136"/>
    </location>
</feature>
<feature type="region of interest" description="Disordered" evidence="2">
    <location>
        <begin position="115"/>
        <end position="136"/>
    </location>
</feature>
<feature type="compositionally biased region" description="Basic residues" evidence="2">
    <location>
        <begin position="117"/>
        <end position="136"/>
    </location>
</feature>
<accession>Q98Q72</accession>
<name>RS9_MYCPU</name>
<proteinExistence type="inferred from homology"/>
<reference key="1">
    <citation type="journal article" date="2001" name="Nucleic Acids Res.">
        <title>The complete genome sequence of the murine respiratory pathogen Mycoplasma pulmonis.</title>
        <authorList>
            <person name="Chambaud I."/>
            <person name="Heilig R."/>
            <person name="Ferris S."/>
            <person name="Barbe V."/>
            <person name="Samson D."/>
            <person name="Galisson F."/>
            <person name="Moszer I."/>
            <person name="Dybvig K."/>
            <person name="Wroblewski H."/>
            <person name="Viari A."/>
            <person name="Rocha E.P.C."/>
            <person name="Blanchard A."/>
        </authorList>
    </citation>
    <scope>NUCLEOTIDE SEQUENCE [LARGE SCALE GENOMIC DNA]</scope>
    <source>
        <strain>UAB CTIP</strain>
    </source>
</reference>
<comment type="similarity">
    <text evidence="1">Belongs to the universal ribosomal protein uS9 family.</text>
</comment>
<organism>
    <name type="scientific">Mycoplasmopsis pulmonis (strain UAB CTIP)</name>
    <name type="common">Mycoplasma pulmonis</name>
    <dbReference type="NCBI Taxonomy" id="272635"/>
    <lineage>
        <taxon>Bacteria</taxon>
        <taxon>Bacillati</taxon>
        <taxon>Mycoplasmatota</taxon>
        <taxon>Mycoplasmoidales</taxon>
        <taxon>Metamycoplasmataceae</taxon>
        <taxon>Mycoplasmopsis</taxon>
    </lineage>
</organism>
<protein>
    <recommendedName>
        <fullName evidence="1">Small ribosomal subunit protein uS9</fullName>
    </recommendedName>
    <alternativeName>
        <fullName evidence="3">30S ribosomal protein S9</fullName>
    </alternativeName>
</protein>
<keyword id="KW-1185">Reference proteome</keyword>
<keyword id="KW-0687">Ribonucleoprotein</keyword>
<keyword id="KW-0689">Ribosomal protein</keyword>
<evidence type="ECO:0000255" key="1">
    <source>
        <dbReference type="HAMAP-Rule" id="MF_00532"/>
    </source>
</evidence>
<evidence type="ECO:0000256" key="2">
    <source>
        <dbReference type="SAM" id="MobiDB-lite"/>
    </source>
</evidence>
<evidence type="ECO:0000305" key="3"/>
<dbReference type="EMBL" id="AL445564">
    <property type="protein sequence ID" value="CAC13669.1"/>
    <property type="molecule type" value="Genomic_DNA"/>
</dbReference>
<dbReference type="PIR" id="H90573">
    <property type="entry name" value="H90573"/>
</dbReference>
<dbReference type="RefSeq" id="WP_010925297.1">
    <property type="nucleotide sequence ID" value="NC_002771.1"/>
</dbReference>
<dbReference type="SMR" id="Q98Q72"/>
<dbReference type="STRING" id="272635.gene:17577097"/>
<dbReference type="KEGG" id="mpu:MYPU_4960"/>
<dbReference type="eggNOG" id="COG0103">
    <property type="taxonomic scope" value="Bacteria"/>
</dbReference>
<dbReference type="HOGENOM" id="CLU_046483_2_1_14"/>
<dbReference type="BioCyc" id="MPUL272635:G1GT6-500-MONOMER"/>
<dbReference type="Proteomes" id="UP000000528">
    <property type="component" value="Chromosome"/>
</dbReference>
<dbReference type="GO" id="GO:0022627">
    <property type="term" value="C:cytosolic small ribosomal subunit"/>
    <property type="evidence" value="ECO:0007669"/>
    <property type="project" value="TreeGrafter"/>
</dbReference>
<dbReference type="GO" id="GO:0003723">
    <property type="term" value="F:RNA binding"/>
    <property type="evidence" value="ECO:0007669"/>
    <property type="project" value="TreeGrafter"/>
</dbReference>
<dbReference type="GO" id="GO:0003735">
    <property type="term" value="F:structural constituent of ribosome"/>
    <property type="evidence" value="ECO:0007669"/>
    <property type="project" value="InterPro"/>
</dbReference>
<dbReference type="GO" id="GO:0006412">
    <property type="term" value="P:translation"/>
    <property type="evidence" value="ECO:0007669"/>
    <property type="project" value="UniProtKB-UniRule"/>
</dbReference>
<dbReference type="FunFam" id="3.30.230.10:FF:000001">
    <property type="entry name" value="30S ribosomal protein S9"/>
    <property type="match status" value="1"/>
</dbReference>
<dbReference type="Gene3D" id="3.30.230.10">
    <property type="match status" value="1"/>
</dbReference>
<dbReference type="HAMAP" id="MF_00532_B">
    <property type="entry name" value="Ribosomal_uS9_B"/>
    <property type="match status" value="1"/>
</dbReference>
<dbReference type="InterPro" id="IPR020568">
    <property type="entry name" value="Ribosomal_Su5_D2-typ_SF"/>
</dbReference>
<dbReference type="InterPro" id="IPR000754">
    <property type="entry name" value="Ribosomal_uS9"/>
</dbReference>
<dbReference type="InterPro" id="IPR023035">
    <property type="entry name" value="Ribosomal_uS9_bac/plastid"/>
</dbReference>
<dbReference type="InterPro" id="IPR020574">
    <property type="entry name" value="Ribosomal_uS9_CS"/>
</dbReference>
<dbReference type="InterPro" id="IPR014721">
    <property type="entry name" value="Ribsml_uS5_D2-typ_fold_subgr"/>
</dbReference>
<dbReference type="NCBIfam" id="NF001099">
    <property type="entry name" value="PRK00132.1"/>
    <property type="match status" value="1"/>
</dbReference>
<dbReference type="PANTHER" id="PTHR21569">
    <property type="entry name" value="RIBOSOMAL PROTEIN S9"/>
    <property type="match status" value="1"/>
</dbReference>
<dbReference type="PANTHER" id="PTHR21569:SF1">
    <property type="entry name" value="SMALL RIBOSOMAL SUBUNIT PROTEIN US9M"/>
    <property type="match status" value="1"/>
</dbReference>
<dbReference type="Pfam" id="PF00380">
    <property type="entry name" value="Ribosomal_S9"/>
    <property type="match status" value="1"/>
</dbReference>
<dbReference type="SUPFAM" id="SSF54211">
    <property type="entry name" value="Ribosomal protein S5 domain 2-like"/>
    <property type="match status" value="1"/>
</dbReference>
<dbReference type="PROSITE" id="PS00360">
    <property type="entry name" value="RIBOSOMAL_S9"/>
    <property type="match status" value="1"/>
</dbReference>
<sequence length="136" mass="15268">MAISYQLKSPAFRGLGRRKSSVARVILLKGSGKFTINKREAKEYLKSDIYIKDALQPFDLTQTNNTFDIRVTVRGGGLAGQAGAIRLGIARALLEISADYRSVLKEAKMLTRNTKVKERKKPGLRKARKARQFSKR</sequence>